<accession>P08555</accession>
<accession>P11693</accession>
<keyword id="KW-0029">Amino-acid transport</keyword>
<keyword id="KW-0997">Cell inner membrane</keyword>
<keyword id="KW-1003">Cell membrane</keyword>
<keyword id="KW-0472">Membrane</keyword>
<keyword id="KW-1185">Reference proteome</keyword>
<keyword id="KW-0812">Transmembrane</keyword>
<keyword id="KW-1133">Transmembrane helix</keyword>
<keyword id="KW-0813">Transport</keyword>
<evidence type="ECO:0000250" key="1">
    <source>
        <dbReference type="UniProtKB" id="A0A0H2VAP9"/>
    </source>
</evidence>
<evidence type="ECO:0000255" key="2"/>
<evidence type="ECO:0000269" key="3">
    <source>
    </source>
</evidence>
<evidence type="ECO:0000269" key="4">
    <source>
    </source>
</evidence>
<evidence type="ECO:0000303" key="5">
    <source>
    </source>
</evidence>
<evidence type="ECO:0000305" key="6"/>
<evidence type="ECO:0000305" key="7">
    <source>
    </source>
</evidence>
<evidence type="ECO:0000305" key="8">
    <source>
    </source>
</evidence>
<evidence type="ECO:0000305" key="9">
    <source>
    </source>
</evidence>
<evidence type="ECO:0000305" key="10">
    <source>
    </source>
</evidence>
<evidence type="ECO:0000305" key="11">
    <source ref="2"/>
</evidence>
<organism>
    <name type="scientific">Escherichia coli (strain K12)</name>
    <dbReference type="NCBI Taxonomy" id="83333"/>
    <lineage>
        <taxon>Bacteria</taxon>
        <taxon>Pseudomonadati</taxon>
        <taxon>Pseudomonadota</taxon>
        <taxon>Gammaproteobacteria</taxon>
        <taxon>Enterobacterales</taxon>
        <taxon>Enterobacteriaceae</taxon>
        <taxon>Escherichia</taxon>
    </lineage>
</organism>
<sequence length="445" mass="47163">MHSQIWVVSTLLISIVLIVLTIVKFKFHPFLALLLASFFVGTMMGMGPLDMVNAIESGIGGTLGFLAAVIGLGTILGKMMEVSGAAERIGLTLQRCRWLSVDVIMVLVGLICGITLFVEVGVVLLIPLAFSIAKKTNTSLLKLAIPLCTALMAVHCVVPPHPAALYVANKLGADIGSVIVYGLLVGLMASLIGGPLFLKFLGQRLPFKPVPTEFADLKVRDEKTLPSLGATLFTILLPIALMLVKTIAELNMARESGLYILVEFIGNPITAMFIAVFVAYYVLGIRQHMSMGTMLTHTENGFGSIANILLIIGAGGAFNAILKSSSLADTLAVILSNMHMHPILLAWLVALILHAAVGSATVAMMGATAIVAPMLPLYPDISPEIIAIAIGSGAIGCTIVTDSLFWLVKQYCGATLNETFKYYTTATFIASVVALAGTFLLSFII</sequence>
<feature type="chain" id="PRO_0000061937" description="D-serine transporter DsdX">
    <location>
        <begin position="1"/>
        <end position="445"/>
    </location>
</feature>
<feature type="topological domain" description="Cytoplasmic" evidence="2">
    <location>
        <begin position="1"/>
        <end position="4"/>
    </location>
</feature>
<feature type="transmembrane region" description="Helical" evidence="2">
    <location>
        <begin position="5"/>
        <end position="25"/>
    </location>
</feature>
<feature type="topological domain" description="Periplasmic" evidence="2">
    <location>
        <begin position="26"/>
        <end position="28"/>
    </location>
</feature>
<feature type="transmembrane region" description="Helical" evidence="2">
    <location>
        <begin position="29"/>
        <end position="49"/>
    </location>
</feature>
<feature type="topological domain" description="Cytoplasmic" evidence="2">
    <location>
        <begin position="50"/>
        <end position="56"/>
    </location>
</feature>
<feature type="transmembrane region" description="Helical" evidence="2">
    <location>
        <begin position="57"/>
        <end position="77"/>
    </location>
</feature>
<feature type="topological domain" description="Periplasmic" evidence="2">
    <location>
        <begin position="78"/>
        <end position="105"/>
    </location>
</feature>
<feature type="transmembrane region" description="Helical" evidence="2">
    <location>
        <begin position="106"/>
        <end position="126"/>
    </location>
</feature>
<feature type="topological domain" description="Cytoplasmic" evidence="2">
    <location>
        <begin position="127"/>
        <end position="139"/>
    </location>
</feature>
<feature type="transmembrane region" description="Helical" evidence="2">
    <location>
        <begin position="140"/>
        <end position="160"/>
    </location>
</feature>
<feature type="topological domain" description="Periplasmic" evidence="2">
    <location>
        <begin position="161"/>
        <end position="177"/>
    </location>
</feature>
<feature type="transmembrane region" description="Helical" evidence="2">
    <location>
        <begin position="178"/>
        <end position="198"/>
    </location>
</feature>
<feature type="topological domain" description="Cytoplasmic" evidence="2">
    <location>
        <begin position="199"/>
        <end position="223"/>
    </location>
</feature>
<feature type="transmembrane region" description="Helical" evidence="2">
    <location>
        <begin position="224"/>
        <end position="244"/>
    </location>
</feature>
<feature type="topological domain" description="Periplasmic" evidence="2">
    <location>
        <begin position="245"/>
        <end position="257"/>
    </location>
</feature>
<feature type="transmembrane region" description="Helical" evidence="2">
    <location>
        <begin position="258"/>
        <end position="278"/>
    </location>
</feature>
<feature type="topological domain" description="Cytoplasmic" evidence="2">
    <location>
        <begin position="279"/>
        <end position="301"/>
    </location>
</feature>
<feature type="transmembrane region" description="Helical" evidence="2">
    <location>
        <begin position="302"/>
        <end position="322"/>
    </location>
</feature>
<feature type="topological domain" description="Periplasmic" evidence="2">
    <location>
        <begin position="323"/>
        <end position="342"/>
    </location>
</feature>
<feature type="transmembrane region" description="Helical" evidence="2">
    <location>
        <begin position="343"/>
        <end position="363"/>
    </location>
</feature>
<feature type="transmembrane region" description="Helical" evidence="2">
    <location>
        <begin position="364"/>
        <end position="384"/>
    </location>
</feature>
<feature type="transmembrane region" description="Helical" evidence="2">
    <location>
        <begin position="385"/>
        <end position="405"/>
    </location>
</feature>
<feature type="topological domain" description="Cytoplasmic" evidence="2">
    <location>
        <begin position="406"/>
        <end position="424"/>
    </location>
</feature>
<feature type="transmembrane region" description="Helical" evidence="2">
    <location>
        <begin position="425"/>
        <end position="445"/>
    </location>
</feature>
<gene>
    <name evidence="5" type="primary">dsdX</name>
    <name evidence="5" type="synonym">orf445</name>
    <name type="synonym">yfdA</name>
    <name type="synonym">yfdD</name>
    <name type="ordered locus">b2365</name>
    <name type="ordered locus">JW2362</name>
</gene>
<proteinExistence type="evidence at protein level"/>
<comment type="function">
    <text evidence="1">A D-serine-specific transporter, may function as a H(+) symporter.</text>
</comment>
<comment type="subcellular location">
    <subcellularLocation>
        <location evidence="3">Cell inner membrane</location>
        <topology evidence="6">Multi-pass membrane protein</topology>
    </subcellularLocation>
</comment>
<comment type="induction">
    <text evidence="4">By growth in D-serine, controlled by DsdC.</text>
</comment>
<comment type="similarity">
    <text evidence="6">Belongs to the GntP permease family.</text>
</comment>
<comment type="caution">
    <text evidence="7 8 9 10 11">An ORF called dsdC was originally assigned to the wrong DNA strand and thought to be a D-serine deaminase activator (PubMed:3275618). It was then resequenced and still thought to be 'dsdC', but this time to function as a D-serine permease (Ref.2). Another report showed that dsdC is another gene and that this sequence should be called dsdX (PubMed:7592420). It should also be noted that the C-terminal part of dsdX (from 338 onward) was also sequenced and was thought to be a separate ORF (don't worry, we also had difficulties understanding what happened!) (PubMed:1659648, PubMed:3029015).</text>
</comment>
<dbReference type="EMBL" id="X91821">
    <property type="protein sequence ID" value="CAA62932.1"/>
    <property type="molecule type" value="Genomic_DNA"/>
</dbReference>
<dbReference type="EMBL" id="X86379">
    <property type="protein sequence ID" value="CAA60138.1"/>
    <property type="molecule type" value="Genomic_DNA"/>
</dbReference>
<dbReference type="EMBL" id="J01603">
    <property type="protein sequence ID" value="AAA87974.1"/>
    <property type="molecule type" value="Genomic_DNA"/>
</dbReference>
<dbReference type="EMBL" id="U00096">
    <property type="protein sequence ID" value="AAC75424.1"/>
    <property type="molecule type" value="Genomic_DNA"/>
</dbReference>
<dbReference type="EMBL" id="AP009048">
    <property type="protein sequence ID" value="BAA16225.1"/>
    <property type="molecule type" value="Genomic_DNA"/>
</dbReference>
<dbReference type="EMBL" id="M19035">
    <property type="status" value="NOT_ANNOTATED_CDS"/>
    <property type="molecule type" value="Genomic_DNA"/>
</dbReference>
<dbReference type="EMBL" id="X81461">
    <property type="protein sequence ID" value="CAA57221.2"/>
    <property type="molecule type" value="Genomic_DNA"/>
</dbReference>
<dbReference type="PIR" id="S54140">
    <property type="entry name" value="S54140"/>
</dbReference>
<dbReference type="RefSeq" id="NP_416866.1">
    <property type="nucleotide sequence ID" value="NC_000913.3"/>
</dbReference>
<dbReference type="RefSeq" id="WP_000556048.1">
    <property type="nucleotide sequence ID" value="NZ_LN832404.1"/>
</dbReference>
<dbReference type="BioGRID" id="4260554">
    <property type="interactions" value="2"/>
</dbReference>
<dbReference type="DIP" id="DIP-9481N"/>
<dbReference type="FunCoup" id="P08555">
    <property type="interactions" value="46"/>
</dbReference>
<dbReference type="IntAct" id="P08555">
    <property type="interactions" value="1"/>
</dbReference>
<dbReference type="STRING" id="511145.b2365"/>
<dbReference type="TCDB" id="2.A.8.1.5">
    <property type="family name" value="the gluconate:h(+) symporter (gntp) family"/>
</dbReference>
<dbReference type="PaxDb" id="511145-b2365"/>
<dbReference type="EnsemblBacteria" id="AAC75424">
    <property type="protein sequence ID" value="AAC75424"/>
    <property type="gene ID" value="b2365"/>
</dbReference>
<dbReference type="GeneID" id="949103"/>
<dbReference type="KEGG" id="ecj:JW2362"/>
<dbReference type="KEGG" id="eco:b2365"/>
<dbReference type="KEGG" id="ecoc:C3026_13155"/>
<dbReference type="PATRIC" id="fig|1411691.4.peg.4364"/>
<dbReference type="EchoBASE" id="EB0246"/>
<dbReference type="eggNOG" id="COG2610">
    <property type="taxonomic scope" value="Bacteria"/>
</dbReference>
<dbReference type="HOGENOM" id="CLU_027949_0_0_6"/>
<dbReference type="InParanoid" id="P08555"/>
<dbReference type="OMA" id="MAVHCIV"/>
<dbReference type="OrthoDB" id="9787129at2"/>
<dbReference type="PhylomeDB" id="P08555"/>
<dbReference type="BioCyc" id="EcoCyc:DSDX-MONOMER"/>
<dbReference type="PRO" id="PR:P08555"/>
<dbReference type="Proteomes" id="UP000000625">
    <property type="component" value="Chromosome"/>
</dbReference>
<dbReference type="GO" id="GO:0005886">
    <property type="term" value="C:plasma membrane"/>
    <property type="evidence" value="ECO:0000314"/>
    <property type="project" value="EcoCyc"/>
</dbReference>
<dbReference type="GO" id="GO:0042945">
    <property type="term" value="F:D-serine transmembrane transporter activity"/>
    <property type="evidence" value="ECO:0000250"/>
    <property type="project" value="EcoCyc"/>
</dbReference>
<dbReference type="GO" id="GO:0015128">
    <property type="term" value="F:gluconate transmembrane transporter activity"/>
    <property type="evidence" value="ECO:0000318"/>
    <property type="project" value="GO_Central"/>
</dbReference>
<dbReference type="GO" id="GO:0042942">
    <property type="term" value="P:D-serine transmembrane transport"/>
    <property type="evidence" value="ECO:0000250"/>
    <property type="project" value="EcoCyc"/>
</dbReference>
<dbReference type="GO" id="GO:0006974">
    <property type="term" value="P:DNA damage response"/>
    <property type="evidence" value="ECO:0000270"/>
    <property type="project" value="EcoliWiki"/>
</dbReference>
<dbReference type="GO" id="GO:0035429">
    <property type="term" value="P:gluconate transmembrane transport"/>
    <property type="evidence" value="ECO:0000318"/>
    <property type="project" value="GO_Central"/>
</dbReference>
<dbReference type="InterPro" id="IPR003474">
    <property type="entry name" value="Glcn_transporter"/>
</dbReference>
<dbReference type="NCBIfam" id="TIGR00791">
    <property type="entry name" value="gntP"/>
    <property type="match status" value="1"/>
</dbReference>
<dbReference type="NCBIfam" id="NF007395">
    <property type="entry name" value="PRK09921.1"/>
    <property type="match status" value="1"/>
</dbReference>
<dbReference type="PANTHER" id="PTHR30354:SF6">
    <property type="entry name" value="D-SERINE TRANSPORTER DSDX"/>
    <property type="match status" value="1"/>
</dbReference>
<dbReference type="PANTHER" id="PTHR30354">
    <property type="entry name" value="GNT FAMILY GLUCONATE TRANSPORTER"/>
    <property type="match status" value="1"/>
</dbReference>
<dbReference type="Pfam" id="PF02447">
    <property type="entry name" value="GntP_permease"/>
    <property type="match status" value="1"/>
</dbReference>
<dbReference type="PIRSF" id="PIRSF002746">
    <property type="entry name" value="Gluconate_transporter"/>
    <property type="match status" value="1"/>
</dbReference>
<reference key="1">
    <citation type="journal article" date="1995" name="J. Bacteriol.">
        <title>Organization and transcriptional regulation of the Escherichia coli K-12 D-serine tolerance locus.</title>
        <authorList>
            <person name="Noerregaard-Madsen M."/>
            <person name="McFall E."/>
            <person name="Valentin-Hansen P."/>
        </authorList>
    </citation>
    <scope>NUCLEOTIDE SEQUENCE [GENOMIC DNA]</scope>
    <scope>INDUCTION BY D-SERINE</scope>
    <source>
        <strain>K12</strain>
    </source>
</reference>
<reference key="2">
    <citation type="submission" date="1995-04" db="EMBL/GenBank/DDBJ databases">
        <authorList>
            <person name="Brannigan J.A."/>
        </authorList>
    </citation>
    <scope>NUCLEOTIDE SEQUENCE [GENOMIC DNA]</scope>
    <source>
        <strain>K12</strain>
    </source>
</reference>
<reference key="3">
    <citation type="journal article" date="1988" name="J. Bacteriol.">
        <title>DNA sequence of the D-serine deaminase activator gene dsdC.</title>
        <authorList>
            <person name="Palchaudhuri S."/>
            <person name="Patel V."/>
            <person name="McFall E."/>
        </authorList>
    </citation>
    <scope>PRELIMINARY NUCLEOTIDE SEQUENCE [GENOMIC DNA]</scope>
</reference>
<reference key="4">
    <citation type="journal article" date="1997" name="DNA Res.">
        <title>Construction of a contiguous 874-kb sequence of the Escherichia coli-K12 genome corresponding to 50.0-68.8 min on the linkage map and analysis of its sequence features.</title>
        <authorList>
            <person name="Yamamoto Y."/>
            <person name="Aiba H."/>
            <person name="Baba T."/>
            <person name="Hayashi K."/>
            <person name="Inada T."/>
            <person name="Isono K."/>
            <person name="Itoh T."/>
            <person name="Kimura S."/>
            <person name="Kitagawa M."/>
            <person name="Makino K."/>
            <person name="Miki T."/>
            <person name="Mitsuhashi N."/>
            <person name="Mizobuchi K."/>
            <person name="Mori H."/>
            <person name="Nakade S."/>
            <person name="Nakamura Y."/>
            <person name="Nashimoto H."/>
            <person name="Oshima T."/>
            <person name="Oyama S."/>
            <person name="Saito N."/>
            <person name="Sampei G."/>
            <person name="Satoh Y."/>
            <person name="Sivasundaram S."/>
            <person name="Tagami H."/>
            <person name="Takahashi H."/>
            <person name="Takeda J."/>
            <person name="Takemoto K."/>
            <person name="Uehara K."/>
            <person name="Wada C."/>
            <person name="Yamagata S."/>
            <person name="Horiuchi T."/>
        </authorList>
    </citation>
    <scope>NUCLEOTIDE SEQUENCE [LARGE SCALE GENOMIC DNA]</scope>
    <source>
        <strain>K12 / W3110 / ATCC 27325 / DSM 5911</strain>
    </source>
</reference>
<reference key="5">
    <citation type="journal article" date="1997" name="Science">
        <title>The complete genome sequence of Escherichia coli K-12.</title>
        <authorList>
            <person name="Blattner F.R."/>
            <person name="Plunkett G. III"/>
            <person name="Bloch C.A."/>
            <person name="Perna N.T."/>
            <person name="Burland V."/>
            <person name="Riley M."/>
            <person name="Collado-Vides J."/>
            <person name="Glasner J.D."/>
            <person name="Rode C.K."/>
            <person name="Mayhew G.F."/>
            <person name="Gregor J."/>
            <person name="Davis N.W."/>
            <person name="Kirkpatrick H.A."/>
            <person name="Goeden M.A."/>
            <person name="Rose D.J."/>
            <person name="Mau B."/>
            <person name="Shao Y."/>
        </authorList>
    </citation>
    <scope>NUCLEOTIDE SEQUENCE [LARGE SCALE GENOMIC DNA]</scope>
    <source>
        <strain>K12 / MG1655 / ATCC 47076</strain>
    </source>
</reference>
<reference key="6">
    <citation type="journal article" date="2006" name="Mol. Syst. Biol.">
        <title>Highly accurate genome sequences of Escherichia coli K-12 strains MG1655 and W3110.</title>
        <authorList>
            <person name="Hayashi K."/>
            <person name="Morooka N."/>
            <person name="Yamamoto Y."/>
            <person name="Fujita K."/>
            <person name="Isono K."/>
            <person name="Choi S."/>
            <person name="Ohtsubo E."/>
            <person name="Baba T."/>
            <person name="Wanner B.L."/>
            <person name="Mori H."/>
            <person name="Horiuchi T."/>
        </authorList>
    </citation>
    <scope>NUCLEOTIDE SEQUENCE [LARGE SCALE GENOMIC DNA]</scope>
    <source>
        <strain>K12 / W3110 / ATCC 27325 / DSM 5911</strain>
    </source>
</reference>
<reference key="7">
    <citation type="journal article" date="1987" name="J. Bacteriol.">
        <title>In vivo D-serine deaminase transcription start sites in wild-type Escherichia coli and in dsdA promoter mutants.</title>
        <authorList>
            <person name="Bornstein-Forst S.M."/>
            <person name="McFall E."/>
            <person name="Palchaudhuri S."/>
        </authorList>
    </citation>
    <scope>NUCLEOTIDE SEQUENCE [GENOMIC DNA] OF 338-445</scope>
</reference>
<reference key="8">
    <citation type="journal article" date="1991" name="Mol. Microbiol.">
        <title>Analysis of the gluconate (gnt) operon of Bacillus subtilis.</title>
        <authorList>
            <person name="Reizer A."/>
            <person name="Deutscher J."/>
            <person name="Saier M.H. Jr."/>
            <person name="Reizer J."/>
        </authorList>
    </citation>
    <scope>NUCLEOTIDE SEQUENCE [GENOMIC DNA] OF 338-445</scope>
</reference>
<reference key="9">
    <citation type="journal article" date="2002" name="J. Bacteriol.">
        <title>Adaptation of sucrose metabolism in the Escherichia coli wild-type strain EC3132.</title>
        <authorList>
            <person name="Jahreis K."/>
            <person name="Bentler L."/>
            <person name="Bockmann J."/>
            <person name="Hans S."/>
            <person name="Meyer A."/>
            <person name="Siepelmeyer J."/>
            <person name="Lengeler J.W."/>
        </authorList>
    </citation>
    <scope>NUCLEOTIDE SEQUENCE [GENOMIC DNA] OF 374-445</scope>
    <source>
        <strain>EC3132</strain>
    </source>
</reference>
<reference key="10">
    <citation type="journal article" date="2005" name="Science">
        <title>Global topology analysis of the Escherichia coli inner membrane proteome.</title>
        <authorList>
            <person name="Daley D.O."/>
            <person name="Rapp M."/>
            <person name="Granseth E."/>
            <person name="Melen K."/>
            <person name="Drew D."/>
            <person name="von Heijne G."/>
        </authorList>
    </citation>
    <scope>SUBCELLULAR LOCATION</scope>
    <scope>TOPOLOGY [LARGE SCALE ANALYSIS]</scope>
    <source>
        <strain>K12 / MG1655 / ATCC 47076</strain>
    </source>
</reference>
<protein>
    <recommendedName>
        <fullName>D-serine transporter DsdX</fullName>
    </recommendedName>
</protein>
<name>DSDX_ECOLI</name>